<dbReference type="EMBL" id="CU207211">
    <property type="protein sequence ID" value="CAL60474.1"/>
    <property type="molecule type" value="Genomic_DNA"/>
</dbReference>
<dbReference type="SMR" id="A4G1T7"/>
<dbReference type="STRING" id="204773.HEAR0245"/>
<dbReference type="KEGG" id="har:HEAR0245"/>
<dbReference type="eggNOG" id="COG0316">
    <property type="taxonomic scope" value="Bacteria"/>
</dbReference>
<dbReference type="HOGENOM" id="CLU_069054_5_3_4"/>
<dbReference type="OrthoDB" id="9801228at2"/>
<dbReference type="Proteomes" id="UP000006697">
    <property type="component" value="Chromosome"/>
</dbReference>
<dbReference type="GO" id="GO:0051537">
    <property type="term" value="F:2 iron, 2 sulfur cluster binding"/>
    <property type="evidence" value="ECO:0007669"/>
    <property type="project" value="TreeGrafter"/>
</dbReference>
<dbReference type="GO" id="GO:0051539">
    <property type="term" value="F:4 iron, 4 sulfur cluster binding"/>
    <property type="evidence" value="ECO:0007669"/>
    <property type="project" value="TreeGrafter"/>
</dbReference>
<dbReference type="GO" id="GO:0005506">
    <property type="term" value="F:iron ion binding"/>
    <property type="evidence" value="ECO:0007669"/>
    <property type="project" value="UniProtKB-UniRule"/>
</dbReference>
<dbReference type="GO" id="GO:0016226">
    <property type="term" value="P:iron-sulfur cluster assembly"/>
    <property type="evidence" value="ECO:0007669"/>
    <property type="project" value="UniProtKB-UniRule"/>
</dbReference>
<dbReference type="FunFam" id="2.60.300.12:FF:000002">
    <property type="entry name" value="Iron-sulfur cluster insertion protein ErpA"/>
    <property type="match status" value="1"/>
</dbReference>
<dbReference type="Gene3D" id="2.60.300.12">
    <property type="entry name" value="HesB-like domain"/>
    <property type="match status" value="1"/>
</dbReference>
<dbReference type="HAMAP" id="MF_01380">
    <property type="entry name" value="Fe_S_insert_ErpA"/>
    <property type="match status" value="1"/>
</dbReference>
<dbReference type="InterPro" id="IPR000361">
    <property type="entry name" value="FeS_biogenesis"/>
</dbReference>
<dbReference type="InterPro" id="IPR016092">
    <property type="entry name" value="FeS_cluster_insertion"/>
</dbReference>
<dbReference type="InterPro" id="IPR017870">
    <property type="entry name" value="FeS_cluster_insertion_CS"/>
</dbReference>
<dbReference type="InterPro" id="IPR023063">
    <property type="entry name" value="FeS_cluster_insertion_RrpA"/>
</dbReference>
<dbReference type="InterPro" id="IPR035903">
    <property type="entry name" value="HesB-like_dom_sf"/>
</dbReference>
<dbReference type="NCBIfam" id="TIGR00049">
    <property type="entry name" value="iron-sulfur cluster assembly accessory protein"/>
    <property type="match status" value="1"/>
</dbReference>
<dbReference type="NCBIfam" id="NF010147">
    <property type="entry name" value="PRK13623.1"/>
    <property type="match status" value="1"/>
</dbReference>
<dbReference type="PANTHER" id="PTHR43011">
    <property type="entry name" value="IRON-SULFUR CLUSTER ASSEMBLY 2 HOMOLOG, MITOCHONDRIAL"/>
    <property type="match status" value="1"/>
</dbReference>
<dbReference type="PANTHER" id="PTHR43011:SF1">
    <property type="entry name" value="IRON-SULFUR CLUSTER ASSEMBLY 2 HOMOLOG, MITOCHONDRIAL"/>
    <property type="match status" value="1"/>
</dbReference>
<dbReference type="Pfam" id="PF01521">
    <property type="entry name" value="Fe-S_biosyn"/>
    <property type="match status" value="1"/>
</dbReference>
<dbReference type="SUPFAM" id="SSF89360">
    <property type="entry name" value="HesB-like domain"/>
    <property type="match status" value="1"/>
</dbReference>
<dbReference type="PROSITE" id="PS01152">
    <property type="entry name" value="HESB"/>
    <property type="match status" value="1"/>
</dbReference>
<gene>
    <name evidence="1" type="primary">erpA</name>
    <name type="ordered locus">HEAR0245</name>
</gene>
<reference key="1">
    <citation type="journal article" date="2007" name="PLoS Genet.">
        <title>A tale of two oxidation states: bacterial colonization of arsenic-rich environments.</title>
        <authorList>
            <person name="Muller D."/>
            <person name="Medigue C."/>
            <person name="Koechler S."/>
            <person name="Barbe V."/>
            <person name="Barakat M."/>
            <person name="Talla E."/>
            <person name="Bonnefoy V."/>
            <person name="Krin E."/>
            <person name="Arsene-Ploetze F."/>
            <person name="Carapito C."/>
            <person name="Chandler M."/>
            <person name="Cournoyer B."/>
            <person name="Cruveiller S."/>
            <person name="Dossat C."/>
            <person name="Duval S."/>
            <person name="Heymann M."/>
            <person name="Leize E."/>
            <person name="Lieutaud A."/>
            <person name="Lievremont D."/>
            <person name="Makita Y."/>
            <person name="Mangenot S."/>
            <person name="Nitschke W."/>
            <person name="Ortet P."/>
            <person name="Perdrial N."/>
            <person name="Schoepp B."/>
            <person name="Siguier P."/>
            <person name="Simeonova D.D."/>
            <person name="Rouy Z."/>
            <person name="Segurens B."/>
            <person name="Turlin E."/>
            <person name="Vallenet D."/>
            <person name="van Dorsselaer A."/>
            <person name="Weiss S."/>
            <person name="Weissenbach J."/>
            <person name="Lett M.-C."/>
            <person name="Danchin A."/>
            <person name="Bertin P.N."/>
        </authorList>
    </citation>
    <scope>NUCLEOTIDE SEQUENCE [LARGE SCALE GENOMIC DNA]</scope>
    <source>
        <strain>ULPAs1</strain>
    </source>
</reference>
<accession>A4G1T7</accession>
<evidence type="ECO:0000255" key="1">
    <source>
        <dbReference type="HAMAP-Rule" id="MF_01380"/>
    </source>
</evidence>
<name>ERPA_HERAR</name>
<organism>
    <name type="scientific">Herminiimonas arsenicoxydans</name>
    <dbReference type="NCBI Taxonomy" id="204773"/>
    <lineage>
        <taxon>Bacteria</taxon>
        <taxon>Pseudomonadati</taxon>
        <taxon>Pseudomonadota</taxon>
        <taxon>Betaproteobacteria</taxon>
        <taxon>Burkholderiales</taxon>
        <taxon>Oxalobacteraceae</taxon>
        <taxon>Herminiimonas</taxon>
    </lineage>
</organism>
<feature type="chain" id="PRO_0000311494" description="Putative iron-sulfur cluster insertion protein ErpA">
    <location>
        <begin position="1"/>
        <end position="116"/>
    </location>
</feature>
<feature type="binding site" evidence="1">
    <location>
        <position position="44"/>
    </location>
    <ligand>
        <name>iron-sulfur cluster</name>
        <dbReference type="ChEBI" id="CHEBI:30408"/>
    </ligand>
</feature>
<feature type="binding site" evidence="1">
    <location>
        <position position="108"/>
    </location>
    <ligand>
        <name>iron-sulfur cluster</name>
        <dbReference type="ChEBI" id="CHEBI:30408"/>
    </ligand>
</feature>
<feature type="binding site" evidence="1">
    <location>
        <position position="110"/>
    </location>
    <ligand>
        <name>iron-sulfur cluster</name>
        <dbReference type="ChEBI" id="CHEBI:30408"/>
    </ligand>
</feature>
<protein>
    <recommendedName>
        <fullName evidence="1">Putative iron-sulfur cluster insertion protein ErpA</fullName>
    </recommendedName>
</protein>
<proteinExistence type="inferred from homology"/>
<comment type="function">
    <text evidence="1">Required for insertion of 4Fe-4S clusters.</text>
</comment>
<comment type="cofactor">
    <cofactor evidence="1">
        <name>iron-sulfur cluster</name>
        <dbReference type="ChEBI" id="CHEBI:30408"/>
    </cofactor>
    <text evidence="1">Binds 1 iron-sulfur cluster per subunit.</text>
</comment>
<comment type="subunit">
    <text evidence="1">Homodimer.</text>
</comment>
<comment type="similarity">
    <text evidence="1">Belongs to the HesB/IscA family.</text>
</comment>
<keyword id="KW-0408">Iron</keyword>
<keyword id="KW-0411">Iron-sulfur</keyword>
<keyword id="KW-0479">Metal-binding</keyword>
<keyword id="KW-1185">Reference proteome</keyword>
<sequence>MNAIAEMPSPILFSDSAAAKVAELIEDEGNPDLKLRVFVQGGGCSGFQYGFTFDEIVNEDDTTMTKNGVQLLIDSMSYQYLVGAEIDYKDDLEGAQFVIKNPNATTTCGCGSSFTA</sequence>